<gene>
    <name evidence="1" type="primary">egsA</name>
    <name type="ordered locus">M1425_1382</name>
</gene>
<comment type="function">
    <text evidence="1">Catalyzes the NAD(P)H-dependent reduction of dihydroxyacetonephosphate (DHAP or glycerone phosphate) to glycerol 1-phosphate (G1P). The G1P thus generated is used as the glycerophosphate backbone of phospholipids in the cellular membranes of Archaea.</text>
</comment>
<comment type="catalytic activity">
    <reaction evidence="1">
        <text>sn-glycerol 1-phosphate + NAD(+) = dihydroxyacetone phosphate + NADH + H(+)</text>
        <dbReference type="Rhea" id="RHEA:21412"/>
        <dbReference type="ChEBI" id="CHEBI:15378"/>
        <dbReference type="ChEBI" id="CHEBI:57540"/>
        <dbReference type="ChEBI" id="CHEBI:57642"/>
        <dbReference type="ChEBI" id="CHEBI:57685"/>
        <dbReference type="ChEBI" id="CHEBI:57945"/>
        <dbReference type="EC" id="1.1.1.261"/>
    </reaction>
</comment>
<comment type="catalytic activity">
    <reaction evidence="1">
        <text>sn-glycerol 1-phosphate + NADP(+) = dihydroxyacetone phosphate + NADPH + H(+)</text>
        <dbReference type="Rhea" id="RHEA:21416"/>
        <dbReference type="ChEBI" id="CHEBI:15378"/>
        <dbReference type="ChEBI" id="CHEBI:57642"/>
        <dbReference type="ChEBI" id="CHEBI:57685"/>
        <dbReference type="ChEBI" id="CHEBI:57783"/>
        <dbReference type="ChEBI" id="CHEBI:58349"/>
        <dbReference type="EC" id="1.1.1.261"/>
    </reaction>
</comment>
<comment type="cofactor">
    <cofactor evidence="1">
        <name>Zn(2+)</name>
        <dbReference type="ChEBI" id="CHEBI:29105"/>
    </cofactor>
    <text evidence="1">Binds 1 zinc ion per subunit.</text>
</comment>
<comment type="pathway">
    <text evidence="1">Membrane lipid metabolism; glycerophospholipid metabolism.</text>
</comment>
<comment type="subunit">
    <text evidence="1">Homodimer.</text>
</comment>
<comment type="subcellular location">
    <subcellularLocation>
        <location evidence="1">Cytoplasm</location>
    </subcellularLocation>
</comment>
<comment type="similarity">
    <text evidence="1">Belongs to the glycerol-1-phosphate dehydrogenase family.</text>
</comment>
<sequence length="351" mass="38549">MNVKEHVISLPRRVFVGHDIIYDISIYFSQLGITSPFLIVTGTKYTKKIADKVIENLPKDAKYEVIEIDTATLDDVYKVEEVVKKVNPNILLGIGGGKVIDVTKYAAFRNNLEFVSIPTSPSHDGITSPFASIKGLQKPVSVKAKEPLAIIADIEILSLSPRRLINAGIGDTIGKIIAVRDWRLAAKLRGEYYGDYTASLALMSAKHAFQCTKIINKDIKYGVRMLIEALISSGVAMGMAGSTRPASGSEHLFAHAVELLHPEGVLHGELVGLGTIIMAYLHGINWKIIRDRLKKIGFPVKAKDLGLSDEEVIKALTIAHTIRPERYTILGDRGLTWSSAEKIARVTKIID</sequence>
<proteinExistence type="inferred from homology"/>
<organism>
    <name type="scientific">Saccharolobus islandicus (strain M.14.25 / Kamchatka #1)</name>
    <name type="common">Sulfolobus islandicus</name>
    <dbReference type="NCBI Taxonomy" id="427317"/>
    <lineage>
        <taxon>Archaea</taxon>
        <taxon>Thermoproteota</taxon>
        <taxon>Thermoprotei</taxon>
        <taxon>Sulfolobales</taxon>
        <taxon>Sulfolobaceae</taxon>
        <taxon>Saccharolobus</taxon>
    </lineage>
</organism>
<reference key="1">
    <citation type="journal article" date="2009" name="Proc. Natl. Acad. Sci. U.S.A.">
        <title>Biogeography of the Sulfolobus islandicus pan-genome.</title>
        <authorList>
            <person name="Reno M.L."/>
            <person name="Held N.L."/>
            <person name="Fields C.J."/>
            <person name="Burke P.V."/>
            <person name="Whitaker R.J."/>
        </authorList>
    </citation>
    <scope>NUCLEOTIDE SEQUENCE [LARGE SCALE GENOMIC DNA]</scope>
    <source>
        <strain>M.14.25 / Kamchatka #1</strain>
    </source>
</reference>
<name>G1PDH_SACI4</name>
<accession>C3MVE1</accession>
<dbReference type="EC" id="1.1.1.261" evidence="1"/>
<dbReference type="EMBL" id="CP001400">
    <property type="protein sequence ID" value="ACP38136.1"/>
    <property type="molecule type" value="Genomic_DNA"/>
</dbReference>
<dbReference type="RefSeq" id="WP_012711381.1">
    <property type="nucleotide sequence ID" value="NC_012588.1"/>
</dbReference>
<dbReference type="SMR" id="C3MVE1"/>
<dbReference type="KEGG" id="sia:M1425_1382"/>
<dbReference type="HOGENOM" id="CLU_038362_0_0_2"/>
<dbReference type="UniPathway" id="UPA00940"/>
<dbReference type="Proteomes" id="UP000001350">
    <property type="component" value="Chromosome"/>
</dbReference>
<dbReference type="GO" id="GO:0005737">
    <property type="term" value="C:cytoplasm"/>
    <property type="evidence" value="ECO:0007669"/>
    <property type="project" value="UniProtKB-SubCell"/>
</dbReference>
<dbReference type="GO" id="GO:0106357">
    <property type="term" value="F:glycerol-1-phosphate dehydrogenase (NAD+) activity"/>
    <property type="evidence" value="ECO:0007669"/>
    <property type="project" value="RHEA"/>
</dbReference>
<dbReference type="GO" id="GO:0106358">
    <property type="term" value="F:glycerol-1-phosphate dehydrogenase (NADP+) activity"/>
    <property type="evidence" value="ECO:0007669"/>
    <property type="project" value="RHEA"/>
</dbReference>
<dbReference type="GO" id="GO:0046872">
    <property type="term" value="F:metal ion binding"/>
    <property type="evidence" value="ECO:0007669"/>
    <property type="project" value="UniProtKB-KW"/>
</dbReference>
<dbReference type="GO" id="GO:0006650">
    <property type="term" value="P:glycerophospholipid metabolic process"/>
    <property type="evidence" value="ECO:0007669"/>
    <property type="project" value="UniProtKB-UniRule"/>
</dbReference>
<dbReference type="GO" id="GO:0008654">
    <property type="term" value="P:phospholipid biosynthetic process"/>
    <property type="evidence" value="ECO:0007669"/>
    <property type="project" value="UniProtKB-KW"/>
</dbReference>
<dbReference type="CDD" id="cd08173">
    <property type="entry name" value="Gro1PDH"/>
    <property type="match status" value="1"/>
</dbReference>
<dbReference type="Gene3D" id="3.40.50.1970">
    <property type="match status" value="1"/>
</dbReference>
<dbReference type="Gene3D" id="1.20.1090.10">
    <property type="entry name" value="Dehydroquinate synthase-like - alpha domain"/>
    <property type="match status" value="1"/>
</dbReference>
<dbReference type="HAMAP" id="MF_00497_A">
    <property type="entry name" value="G1P_dehydrogenase_A"/>
    <property type="match status" value="1"/>
</dbReference>
<dbReference type="InterPro" id="IPR023002">
    <property type="entry name" value="G1P_dehydrogenase_arc"/>
</dbReference>
<dbReference type="InterPro" id="IPR032837">
    <property type="entry name" value="G1PDH"/>
</dbReference>
<dbReference type="InterPro" id="IPR016205">
    <property type="entry name" value="Glycerol_DH"/>
</dbReference>
<dbReference type="NCBIfam" id="NF002022">
    <property type="entry name" value="PRK00843.1"/>
    <property type="match status" value="1"/>
</dbReference>
<dbReference type="PANTHER" id="PTHR43616">
    <property type="entry name" value="GLYCEROL DEHYDROGENASE"/>
    <property type="match status" value="1"/>
</dbReference>
<dbReference type="PANTHER" id="PTHR43616:SF5">
    <property type="entry name" value="GLYCEROL DEHYDROGENASE 1"/>
    <property type="match status" value="1"/>
</dbReference>
<dbReference type="Pfam" id="PF13685">
    <property type="entry name" value="Fe-ADH_2"/>
    <property type="match status" value="1"/>
</dbReference>
<dbReference type="PIRSF" id="PIRSF000112">
    <property type="entry name" value="Glycerol_dehydrogenase"/>
    <property type="match status" value="1"/>
</dbReference>
<dbReference type="SUPFAM" id="SSF56796">
    <property type="entry name" value="Dehydroquinate synthase-like"/>
    <property type="match status" value="1"/>
</dbReference>
<keyword id="KW-0963">Cytoplasm</keyword>
<keyword id="KW-0444">Lipid biosynthesis</keyword>
<keyword id="KW-0443">Lipid metabolism</keyword>
<keyword id="KW-0479">Metal-binding</keyword>
<keyword id="KW-0520">NAD</keyword>
<keyword id="KW-0521">NADP</keyword>
<keyword id="KW-0560">Oxidoreductase</keyword>
<keyword id="KW-0594">Phospholipid biosynthesis</keyword>
<keyword id="KW-1208">Phospholipid metabolism</keyword>
<keyword id="KW-0862">Zinc</keyword>
<protein>
    <recommendedName>
        <fullName evidence="1">Glycerol-1-phosphate dehydrogenase [NAD(P)+]</fullName>
        <shortName evidence="1">G1P dehydrogenase</shortName>
        <shortName evidence="1">G1PDH</shortName>
        <ecNumber evidence="1">1.1.1.261</ecNumber>
    </recommendedName>
    <alternativeName>
        <fullName evidence="1">Enantiomeric glycerophosphate synthase</fullName>
    </alternativeName>
    <alternativeName>
        <fullName evidence="1">sn-glycerol-1-phosphate dehydrogenase</fullName>
    </alternativeName>
</protein>
<feature type="chain" id="PRO_1000206479" description="Glycerol-1-phosphate dehydrogenase [NAD(P)+]">
    <location>
        <begin position="1"/>
        <end position="351"/>
    </location>
</feature>
<feature type="binding site" evidence="1">
    <location>
        <begin position="97"/>
        <end position="101"/>
    </location>
    <ligand>
        <name>NAD(+)</name>
        <dbReference type="ChEBI" id="CHEBI:57540"/>
    </ligand>
</feature>
<feature type="binding site" evidence="1">
    <location>
        <begin position="119"/>
        <end position="122"/>
    </location>
    <ligand>
        <name>NAD(+)</name>
        <dbReference type="ChEBI" id="CHEBI:57540"/>
    </ligand>
</feature>
<feature type="binding site" evidence="1">
    <location>
        <position position="124"/>
    </location>
    <ligand>
        <name>substrate</name>
    </ligand>
</feature>
<feature type="binding site" evidence="1">
    <location>
        <position position="128"/>
    </location>
    <ligand>
        <name>NAD(+)</name>
        <dbReference type="ChEBI" id="CHEBI:57540"/>
    </ligand>
</feature>
<feature type="binding site" evidence="1">
    <location>
        <position position="171"/>
    </location>
    <ligand>
        <name>substrate</name>
    </ligand>
</feature>
<feature type="binding site" evidence="1">
    <location>
        <position position="171"/>
    </location>
    <ligand>
        <name>Zn(2+)</name>
        <dbReference type="ChEBI" id="CHEBI:29105"/>
        <note>catalytic</note>
    </ligand>
</feature>
<feature type="binding site" evidence="1">
    <location>
        <position position="251"/>
    </location>
    <ligand>
        <name>Zn(2+)</name>
        <dbReference type="ChEBI" id="CHEBI:29105"/>
        <note>catalytic</note>
    </ligand>
</feature>
<feature type="binding site" evidence="1">
    <location>
        <position position="255"/>
    </location>
    <ligand>
        <name>substrate</name>
    </ligand>
</feature>
<feature type="binding site" evidence="1">
    <location>
        <position position="267"/>
    </location>
    <ligand>
        <name>Zn(2+)</name>
        <dbReference type="ChEBI" id="CHEBI:29105"/>
        <note>catalytic</note>
    </ligand>
</feature>
<evidence type="ECO:0000255" key="1">
    <source>
        <dbReference type="HAMAP-Rule" id="MF_00497"/>
    </source>
</evidence>